<evidence type="ECO:0000250" key="1">
    <source>
        <dbReference type="UniProtKB" id="Q5VTY9"/>
    </source>
</evidence>
<evidence type="ECO:0000255" key="2"/>
<evidence type="ECO:0000269" key="3">
    <source>
    </source>
</evidence>
<evidence type="ECO:0000269" key="4">
    <source>
    </source>
</evidence>
<evidence type="ECO:0000269" key="5">
    <source>
    </source>
</evidence>
<evidence type="ECO:0000269" key="6">
    <source>
    </source>
</evidence>
<evidence type="ECO:0000269" key="7">
    <source>
    </source>
</evidence>
<evidence type="ECO:0000269" key="8">
    <source>
    </source>
</evidence>
<evidence type="ECO:0000305" key="9"/>
<evidence type="ECO:0000312" key="10">
    <source>
        <dbReference type="EMBL" id="AAK73748.1"/>
    </source>
</evidence>
<reference evidence="10" key="1">
    <citation type="journal article" date="2001" name="Curr. Biol.">
        <title>Sightless has homology to transmembrane acyltransferases and is required to generate active Hedgehog protein.</title>
        <authorList>
            <person name="Lee J.D."/>
            <person name="Treisman J.E."/>
        </authorList>
    </citation>
    <scope>NUCLEOTIDE SEQUENCE [MRNA]</scope>
    <scope>FUNCTION</scope>
    <source>
        <tissue evidence="5">Embryo</tissue>
    </source>
</reference>
<reference key="2">
    <citation type="journal article" date="2001" name="Development">
        <title>Distinct roles of Central missing and Dispatched in sending the Hedgehog signal.</title>
        <authorList>
            <person name="Amanai K."/>
            <person name="Jiang J."/>
        </authorList>
    </citation>
    <scope>NUCLEOTIDE SEQUENCE [MRNA]</scope>
    <scope>FUNCTION</scope>
</reference>
<reference evidence="9" key="3">
    <citation type="journal article" date="2001" name="Science">
        <title>Skinny hedgehog, an acyltransferase required for palmitoylation and activity of the hedgehog signal.</title>
        <authorList>
            <person name="Chamoun Z."/>
            <person name="Mann R.K."/>
            <person name="Nellen D."/>
            <person name="von Kessler D.P."/>
            <person name="Bellotto M."/>
            <person name="Beachy P.A."/>
            <person name="Basler K."/>
        </authorList>
    </citation>
    <scope>NUCLEOTIDE SEQUENCE [MRNA]</scope>
    <scope>FUNCTION</scope>
    <scope>DEVELOPMENTAL STAGE</scope>
    <scope>CATALYTIC ACTIVITY</scope>
</reference>
<reference evidence="9" key="4">
    <citation type="journal article" date="2000" name="Science">
        <title>The genome sequence of Drosophila melanogaster.</title>
        <authorList>
            <person name="Adams M.D."/>
            <person name="Celniker S.E."/>
            <person name="Holt R.A."/>
            <person name="Evans C.A."/>
            <person name="Gocayne J.D."/>
            <person name="Amanatides P.G."/>
            <person name="Scherer S.E."/>
            <person name="Li P.W."/>
            <person name="Hoskins R.A."/>
            <person name="Galle R.F."/>
            <person name="George R.A."/>
            <person name="Lewis S.E."/>
            <person name="Richards S."/>
            <person name="Ashburner M."/>
            <person name="Henderson S.N."/>
            <person name="Sutton G.G."/>
            <person name="Wortman J.R."/>
            <person name="Yandell M.D."/>
            <person name="Zhang Q."/>
            <person name="Chen L.X."/>
            <person name="Brandon R.C."/>
            <person name="Rogers Y.-H.C."/>
            <person name="Blazej R.G."/>
            <person name="Champe M."/>
            <person name="Pfeiffer B.D."/>
            <person name="Wan K.H."/>
            <person name="Doyle C."/>
            <person name="Baxter E.G."/>
            <person name="Helt G."/>
            <person name="Nelson C.R."/>
            <person name="Miklos G.L.G."/>
            <person name="Abril J.F."/>
            <person name="Agbayani A."/>
            <person name="An H.-J."/>
            <person name="Andrews-Pfannkoch C."/>
            <person name="Baldwin D."/>
            <person name="Ballew R.M."/>
            <person name="Basu A."/>
            <person name="Baxendale J."/>
            <person name="Bayraktaroglu L."/>
            <person name="Beasley E.M."/>
            <person name="Beeson K.Y."/>
            <person name="Benos P.V."/>
            <person name="Berman B.P."/>
            <person name="Bhandari D."/>
            <person name="Bolshakov S."/>
            <person name="Borkova D."/>
            <person name="Botchan M.R."/>
            <person name="Bouck J."/>
            <person name="Brokstein P."/>
            <person name="Brottier P."/>
            <person name="Burtis K.C."/>
            <person name="Busam D.A."/>
            <person name="Butler H."/>
            <person name="Cadieu E."/>
            <person name="Center A."/>
            <person name="Chandra I."/>
            <person name="Cherry J.M."/>
            <person name="Cawley S."/>
            <person name="Dahlke C."/>
            <person name="Davenport L.B."/>
            <person name="Davies P."/>
            <person name="de Pablos B."/>
            <person name="Delcher A."/>
            <person name="Deng Z."/>
            <person name="Mays A.D."/>
            <person name="Dew I."/>
            <person name="Dietz S.M."/>
            <person name="Dodson K."/>
            <person name="Doup L.E."/>
            <person name="Downes M."/>
            <person name="Dugan-Rocha S."/>
            <person name="Dunkov B.C."/>
            <person name="Dunn P."/>
            <person name="Durbin K.J."/>
            <person name="Evangelista C.C."/>
            <person name="Ferraz C."/>
            <person name="Ferriera S."/>
            <person name="Fleischmann W."/>
            <person name="Fosler C."/>
            <person name="Gabrielian A.E."/>
            <person name="Garg N.S."/>
            <person name="Gelbart W.M."/>
            <person name="Glasser K."/>
            <person name="Glodek A."/>
            <person name="Gong F."/>
            <person name="Gorrell J.H."/>
            <person name="Gu Z."/>
            <person name="Guan P."/>
            <person name="Harris M."/>
            <person name="Harris N.L."/>
            <person name="Harvey D.A."/>
            <person name="Heiman T.J."/>
            <person name="Hernandez J.R."/>
            <person name="Houck J."/>
            <person name="Hostin D."/>
            <person name="Houston K.A."/>
            <person name="Howland T.J."/>
            <person name="Wei M.-H."/>
            <person name="Ibegwam C."/>
            <person name="Jalali M."/>
            <person name="Kalush F."/>
            <person name="Karpen G.H."/>
            <person name="Ke Z."/>
            <person name="Kennison J.A."/>
            <person name="Ketchum K.A."/>
            <person name="Kimmel B.E."/>
            <person name="Kodira C.D."/>
            <person name="Kraft C.L."/>
            <person name="Kravitz S."/>
            <person name="Kulp D."/>
            <person name="Lai Z."/>
            <person name="Lasko P."/>
            <person name="Lei Y."/>
            <person name="Levitsky A.A."/>
            <person name="Li J.H."/>
            <person name="Li Z."/>
            <person name="Liang Y."/>
            <person name="Lin X."/>
            <person name="Liu X."/>
            <person name="Mattei B."/>
            <person name="McIntosh T.C."/>
            <person name="McLeod M.P."/>
            <person name="McPherson D."/>
            <person name="Merkulov G."/>
            <person name="Milshina N.V."/>
            <person name="Mobarry C."/>
            <person name="Morris J."/>
            <person name="Moshrefi A."/>
            <person name="Mount S.M."/>
            <person name="Moy M."/>
            <person name="Murphy B."/>
            <person name="Murphy L."/>
            <person name="Muzny D.M."/>
            <person name="Nelson D.L."/>
            <person name="Nelson D.R."/>
            <person name="Nelson K.A."/>
            <person name="Nixon K."/>
            <person name="Nusskern D.R."/>
            <person name="Pacleb J.M."/>
            <person name="Palazzolo M."/>
            <person name="Pittman G.S."/>
            <person name="Pan S."/>
            <person name="Pollard J."/>
            <person name="Puri V."/>
            <person name="Reese M.G."/>
            <person name="Reinert K."/>
            <person name="Remington K."/>
            <person name="Saunders R.D.C."/>
            <person name="Scheeler F."/>
            <person name="Shen H."/>
            <person name="Shue B.C."/>
            <person name="Siden-Kiamos I."/>
            <person name="Simpson M."/>
            <person name="Skupski M.P."/>
            <person name="Smith T.J."/>
            <person name="Spier E."/>
            <person name="Spradling A.C."/>
            <person name="Stapleton M."/>
            <person name="Strong R."/>
            <person name="Sun E."/>
            <person name="Svirskas R."/>
            <person name="Tector C."/>
            <person name="Turner R."/>
            <person name="Venter E."/>
            <person name="Wang A.H."/>
            <person name="Wang X."/>
            <person name="Wang Z.-Y."/>
            <person name="Wassarman D.A."/>
            <person name="Weinstock G.M."/>
            <person name="Weissenbach J."/>
            <person name="Williams S.M."/>
            <person name="Woodage T."/>
            <person name="Worley K.C."/>
            <person name="Wu D."/>
            <person name="Yang S."/>
            <person name="Yao Q.A."/>
            <person name="Ye J."/>
            <person name="Yeh R.-F."/>
            <person name="Zaveri J.S."/>
            <person name="Zhan M."/>
            <person name="Zhang G."/>
            <person name="Zhao Q."/>
            <person name="Zheng L."/>
            <person name="Zheng X.H."/>
            <person name="Zhong F.N."/>
            <person name="Zhong W."/>
            <person name="Zhou X."/>
            <person name="Zhu S.C."/>
            <person name="Zhu X."/>
            <person name="Smith H.O."/>
            <person name="Gibbs R.A."/>
            <person name="Myers E.W."/>
            <person name="Rubin G.M."/>
            <person name="Venter J.C."/>
        </authorList>
    </citation>
    <scope>NUCLEOTIDE SEQUENCE [LARGE SCALE GENOMIC DNA]</scope>
    <source>
        <strain evidence="3">Berkeley</strain>
    </source>
</reference>
<reference key="5">
    <citation type="journal article" date="2002" name="Genome Biol.">
        <title>Annotation of the Drosophila melanogaster euchromatic genome: a systematic review.</title>
        <authorList>
            <person name="Misra S."/>
            <person name="Crosby M.A."/>
            <person name="Mungall C.J."/>
            <person name="Matthews B.B."/>
            <person name="Campbell K.S."/>
            <person name="Hradecky P."/>
            <person name="Huang Y."/>
            <person name="Kaminker J.S."/>
            <person name="Millburn G.H."/>
            <person name="Prochnik S.E."/>
            <person name="Smith C.D."/>
            <person name="Tupy J.L."/>
            <person name="Whitfield E.J."/>
            <person name="Bayraktaroglu L."/>
            <person name="Berman B.P."/>
            <person name="Bettencourt B.R."/>
            <person name="Celniker S.E."/>
            <person name="de Grey A.D.N.J."/>
            <person name="Drysdale R.A."/>
            <person name="Harris N.L."/>
            <person name="Richter J."/>
            <person name="Russo S."/>
            <person name="Schroeder A.J."/>
            <person name="Shu S.Q."/>
            <person name="Stapleton M."/>
            <person name="Yamada C."/>
            <person name="Ashburner M."/>
            <person name="Gelbart W.M."/>
            <person name="Rubin G.M."/>
            <person name="Lewis S.E."/>
        </authorList>
    </citation>
    <scope>GENOME REANNOTATION</scope>
    <source>
        <strain>Berkeley</strain>
    </source>
</reference>
<reference evidence="9" key="6">
    <citation type="journal article" date="2002" name="Genome Biol.">
        <title>A Drosophila full-length cDNA resource.</title>
        <authorList>
            <person name="Stapleton M."/>
            <person name="Carlson J.W."/>
            <person name="Brokstein P."/>
            <person name="Yu C."/>
            <person name="Champe M."/>
            <person name="George R.A."/>
            <person name="Guarin H."/>
            <person name="Kronmiller B."/>
            <person name="Pacleb J.M."/>
            <person name="Park S."/>
            <person name="Wan K.H."/>
            <person name="Rubin G.M."/>
            <person name="Celniker S.E."/>
        </authorList>
    </citation>
    <scope>NUCLEOTIDE SEQUENCE [LARGE SCALE MRNA]</scope>
    <source>
        <strain evidence="8">Berkeley</strain>
        <tissue evidence="8">Embryo</tissue>
    </source>
</reference>
<reference key="7">
    <citation type="journal article" date="2002" name="Development">
        <title>Rasp, a putative transmembrane acyltransferase, is required for Hedgehog signaling.</title>
        <authorList>
            <person name="Micchelli C.A."/>
            <person name="The I."/>
            <person name="Selva E."/>
            <person name="Mogila V."/>
            <person name="Perrimon N."/>
        </authorList>
    </citation>
    <scope>FUNCTION</scope>
</reference>
<proteinExistence type="evidence at protein level"/>
<dbReference type="EC" id="2.3.1.-"/>
<dbReference type="EMBL" id="AF393157">
    <property type="protein sequence ID" value="AAK73748.1"/>
    <property type="molecule type" value="mRNA"/>
</dbReference>
<dbReference type="EMBL" id="AF398410">
    <property type="protein sequence ID" value="AAK97480.1"/>
    <property type="molecule type" value="mRNA"/>
</dbReference>
<dbReference type="EMBL" id="AE014296">
    <property type="protein sequence ID" value="AAF47725.1"/>
    <property type="molecule type" value="Genomic_DNA"/>
</dbReference>
<dbReference type="EMBL" id="AY119202">
    <property type="protein sequence ID" value="AAM51062.1"/>
    <property type="molecule type" value="mRNA"/>
</dbReference>
<dbReference type="RefSeq" id="NP_523898.1">
    <property type="nucleotide sequence ID" value="NM_079174.2"/>
</dbReference>
<dbReference type="SMR" id="Q9VZU2"/>
<dbReference type="BioGRID" id="68830">
    <property type="interactions" value="6"/>
</dbReference>
<dbReference type="FunCoup" id="Q9VZU2">
    <property type="interactions" value="244"/>
</dbReference>
<dbReference type="IntAct" id="Q9VZU2">
    <property type="interactions" value="1"/>
</dbReference>
<dbReference type="STRING" id="7227.FBpp0072893"/>
<dbReference type="TCDB" id="2.A.50.1.5">
    <property type="family name" value="the glycerol uptake (gup) or membrane-bound acyl transferase (mboat) family"/>
</dbReference>
<dbReference type="PaxDb" id="7227-FBpp0072893"/>
<dbReference type="EnsemblMetazoa" id="FBtr0073029">
    <property type="protein sequence ID" value="FBpp0072893"/>
    <property type="gene ID" value="FBgn0024194"/>
</dbReference>
<dbReference type="GeneID" id="44098"/>
<dbReference type="KEGG" id="dme:Dmel_CG11495"/>
<dbReference type="AGR" id="FB:FBgn0024194"/>
<dbReference type="CTD" id="44098"/>
<dbReference type="FlyBase" id="FBgn0024194">
    <property type="gene designation" value="rasp"/>
</dbReference>
<dbReference type="VEuPathDB" id="VectorBase:FBgn0024194"/>
<dbReference type="eggNOG" id="KOG3860">
    <property type="taxonomic scope" value="Eukaryota"/>
</dbReference>
<dbReference type="GeneTree" id="ENSGT00530000063629"/>
<dbReference type="HOGENOM" id="CLU_027533_3_0_1"/>
<dbReference type="InParanoid" id="Q9VZU2"/>
<dbReference type="OMA" id="IHYMSRD"/>
<dbReference type="OrthoDB" id="420606at2759"/>
<dbReference type="PhylomeDB" id="Q9VZU2"/>
<dbReference type="Reactome" id="R-DME-209471">
    <property type="pathway name" value="Formation and transport of the N-HH ligand"/>
</dbReference>
<dbReference type="Reactome" id="R-DME-5358346">
    <property type="pathway name" value="Hedgehog ligand biogenesis"/>
</dbReference>
<dbReference type="SignaLink" id="Q9VZU2"/>
<dbReference type="BioGRID-ORCS" id="44098">
    <property type="hits" value="0 hits in 3 CRISPR screens"/>
</dbReference>
<dbReference type="ChiTaRS" id="rin">
    <property type="organism name" value="fly"/>
</dbReference>
<dbReference type="GenomeRNAi" id="44098"/>
<dbReference type="PRO" id="PR:Q9VZU2"/>
<dbReference type="Proteomes" id="UP000000803">
    <property type="component" value="Chromosome 3L"/>
</dbReference>
<dbReference type="Bgee" id="FBgn0024194">
    <property type="expression patterns" value="Expressed in eye disc (Drosophila) and 37 other cell types or tissues"/>
</dbReference>
<dbReference type="ExpressionAtlas" id="Q9VZU2">
    <property type="expression patterns" value="baseline and differential"/>
</dbReference>
<dbReference type="GO" id="GO:0005829">
    <property type="term" value="C:cytosol"/>
    <property type="evidence" value="ECO:0000304"/>
    <property type="project" value="Reactome"/>
</dbReference>
<dbReference type="GO" id="GO:0005783">
    <property type="term" value="C:endoplasmic reticulum"/>
    <property type="evidence" value="ECO:0000318"/>
    <property type="project" value="GO_Central"/>
</dbReference>
<dbReference type="GO" id="GO:0016020">
    <property type="term" value="C:membrane"/>
    <property type="evidence" value="ECO:0000303"/>
    <property type="project" value="UniProtKB"/>
</dbReference>
<dbReference type="GO" id="GO:0016746">
    <property type="term" value="F:acyltransferase activity"/>
    <property type="evidence" value="ECO:0000315"/>
    <property type="project" value="UniProtKB"/>
</dbReference>
<dbReference type="GO" id="GO:0016409">
    <property type="term" value="F:palmitoyltransferase activity"/>
    <property type="evidence" value="ECO:0000318"/>
    <property type="project" value="GO_Central"/>
</dbReference>
<dbReference type="GO" id="GO:0019706">
    <property type="term" value="F:protein-cysteine S-palmitoyltransferase activity"/>
    <property type="evidence" value="ECO:0000314"/>
    <property type="project" value="FlyBase"/>
</dbReference>
<dbReference type="GO" id="GO:0046843">
    <property type="term" value="P:dorsal appendage formation"/>
    <property type="evidence" value="ECO:0000315"/>
    <property type="project" value="FlyBase"/>
</dbReference>
<dbReference type="GO" id="GO:0038004">
    <property type="term" value="P:epidermal growth factor receptor ligand maturation"/>
    <property type="evidence" value="ECO:0000315"/>
    <property type="project" value="FlyBase"/>
</dbReference>
<dbReference type="GO" id="GO:0018009">
    <property type="term" value="P:N-terminal peptidyl-L-cysteine N-palmitoylation"/>
    <property type="evidence" value="ECO:0000314"/>
    <property type="project" value="UniProtKB"/>
</dbReference>
<dbReference type="GO" id="GO:0007225">
    <property type="term" value="P:patched ligand maturation"/>
    <property type="evidence" value="ECO:0000315"/>
    <property type="project" value="FlyBase"/>
</dbReference>
<dbReference type="GO" id="GO:0007367">
    <property type="term" value="P:segment polarity determination"/>
    <property type="evidence" value="ECO:0000315"/>
    <property type="project" value="UniProtKB"/>
</dbReference>
<dbReference type="GO" id="GO:0007224">
    <property type="term" value="P:smoothened signaling pathway"/>
    <property type="evidence" value="ECO:0000304"/>
    <property type="project" value="Reactome"/>
</dbReference>
<dbReference type="GO" id="GO:0048100">
    <property type="term" value="P:wing disc anterior/posterior pattern formation"/>
    <property type="evidence" value="ECO:0000315"/>
    <property type="project" value="FlyBase"/>
</dbReference>
<dbReference type="InterPro" id="IPR051085">
    <property type="entry name" value="MB_O-acyltransferase"/>
</dbReference>
<dbReference type="InterPro" id="IPR004299">
    <property type="entry name" value="MBOAT_fam"/>
</dbReference>
<dbReference type="PANTHER" id="PTHR13285">
    <property type="entry name" value="ACYLTRANSFERASE"/>
    <property type="match status" value="1"/>
</dbReference>
<dbReference type="PANTHER" id="PTHR13285:SF18">
    <property type="entry name" value="PROTEIN-CYSTEINE N-PALMITOYLTRANSFERASE RASP"/>
    <property type="match status" value="1"/>
</dbReference>
<dbReference type="Pfam" id="PF03062">
    <property type="entry name" value="MBOAT"/>
    <property type="match status" value="1"/>
</dbReference>
<sequence length="500" mass="58106">MSRLPDRSLLTRCEIFVYFGVYIAYIVVGLYKIYGLRDHIVKEAKFQFPEGWSLYPFSQRRRDDSNDELENFGDFIVSFWPFYLLHVAVQGFIRWKRPRLQCLGFIGVCALALSVNLDWSSMVLLVTLIASYYIVSLLSLKFLVWLLSAGWILCINVMQKNVWWTDRVGYTEYVLVIVTMSWSVLRGCSYSLSKIGAKQEDLTRYSLVQYLGYAMYFPCLTYGPIISYQRFAARREDEVQNWLGFVGGVLRSAIWWLVMQCALHYFYIHYMSRDVRMVEMMDSVFWQHSAGYFMGQFFFLYYVVTYGLGIAFAVQDGIPAPNRPRCIGRIHFYSDMWKYFDEGLYEFLFQNIYAELCGKRSSAAAKFGATALTFAFVFVWHGCYTYVLIWSILNFLCLAAEKVFKTFTAMPEYQRWTQRHLGAVGAQRLYAMLATQLFIPAAFSNVYFIGGQEIGDFLMRGAYLSGVGNYVALCFCSYCFFQCSELLLTKSDGRSKTKTF</sequence>
<organism evidence="10">
    <name type="scientific">Drosophila melanogaster</name>
    <name type="common">Fruit fly</name>
    <dbReference type="NCBI Taxonomy" id="7227"/>
    <lineage>
        <taxon>Eukaryota</taxon>
        <taxon>Metazoa</taxon>
        <taxon>Ecdysozoa</taxon>
        <taxon>Arthropoda</taxon>
        <taxon>Hexapoda</taxon>
        <taxon>Insecta</taxon>
        <taxon>Pterygota</taxon>
        <taxon>Neoptera</taxon>
        <taxon>Endopterygota</taxon>
        <taxon>Diptera</taxon>
        <taxon>Brachycera</taxon>
        <taxon>Muscomorpha</taxon>
        <taxon>Ephydroidea</taxon>
        <taxon>Drosophilidae</taxon>
        <taxon>Drosophila</taxon>
        <taxon>Sophophora</taxon>
    </lineage>
</organism>
<protein>
    <recommendedName>
        <fullName>Protein-cysteine N-palmitoyltransferase Rasp</fullName>
        <ecNumber>2.3.1.-</ecNumber>
    </recommendedName>
    <alternativeName>
        <fullName>Protein central missing</fullName>
    </alternativeName>
    <alternativeName>
        <fullName>Protein sightless</fullName>
    </alternativeName>
    <alternativeName>
        <fullName>Protein skinny hedgehog</fullName>
    </alternativeName>
</protein>
<comment type="function">
    <text evidence="4 5 6 7">Required in hedgehog (hh) expressing cells for production of appropriate signaling activity in embryos and in the imaginal precursors of adult tissues. Acts within the secretory pathway to catalyze N-terminal palmitoylation of Hh; this lipid modification is required for the embryonic and larval patterning activities of the Hh signal. Not required for Wg signaling.</text>
</comment>
<comment type="catalytic activity">
    <reaction evidence="4">
        <text>N-terminal L-cysteinyl-[protein] + hexadecanoyl-CoA = N-terminal N-hexadecanoyl-L-cysteinyl-[protein] + CoA + H(+)</text>
        <dbReference type="Rhea" id="RHEA:59528"/>
        <dbReference type="Rhea" id="RHEA-COMP:12707"/>
        <dbReference type="Rhea" id="RHEA-COMP:15376"/>
        <dbReference type="ChEBI" id="CHEBI:15378"/>
        <dbReference type="ChEBI" id="CHEBI:57287"/>
        <dbReference type="ChEBI" id="CHEBI:57379"/>
        <dbReference type="ChEBI" id="CHEBI:65250"/>
        <dbReference type="ChEBI" id="CHEBI:143147"/>
    </reaction>
    <physiologicalReaction direction="left-to-right" evidence="4">
        <dbReference type="Rhea" id="RHEA:59529"/>
    </physiologicalReaction>
</comment>
<comment type="catalytic activity">
    <reaction evidence="1">
        <text>N-terminal L-cysteinyl-[protein]-C-terminal glycyl cholesterol ester + hexadecanoyl-CoA = N-terminal N-hexadecanoyl-L-cysteinyl-[protein]-C-terminal glycyl cholesterol ester + CoA + H(+)</text>
        <dbReference type="Rhea" id="RHEA:59580"/>
        <dbReference type="Rhea" id="RHEA-COMP:15388"/>
        <dbReference type="Rhea" id="RHEA-COMP:15389"/>
        <dbReference type="ChEBI" id="CHEBI:15378"/>
        <dbReference type="ChEBI" id="CHEBI:57287"/>
        <dbReference type="ChEBI" id="CHEBI:57379"/>
        <dbReference type="ChEBI" id="CHEBI:65250"/>
        <dbReference type="ChEBI" id="CHEBI:143135"/>
        <dbReference type="ChEBI" id="CHEBI:143147"/>
    </reaction>
    <physiologicalReaction direction="left-to-right" evidence="1">
        <dbReference type="Rhea" id="RHEA:59581"/>
    </physiologicalReaction>
</comment>
<comment type="subcellular location">
    <subcellularLocation>
        <location>Membrane</location>
        <topology>Multi-pass membrane protein</topology>
    </subcellularLocation>
</comment>
<comment type="developmental stage">
    <text evidence="4">Expressed both maternally and zygotically.</text>
</comment>
<comment type="similarity">
    <text evidence="9">Belongs to the membrane-bound acyltransferase family. HHAT subfamily.</text>
</comment>
<keyword id="KW-0012">Acyltransferase</keyword>
<keyword id="KW-0217">Developmental protein</keyword>
<keyword id="KW-0472">Membrane</keyword>
<keyword id="KW-1185">Reference proteome</keyword>
<keyword id="KW-0709">Segmentation polarity protein</keyword>
<keyword id="KW-0808">Transferase</keyword>
<keyword id="KW-0812">Transmembrane</keyword>
<keyword id="KW-1133">Transmembrane helix</keyword>
<gene>
    <name type="primary">rasp</name>
    <name type="synonym">cmn</name>
    <name type="synonym">sit</name>
    <name type="synonym">ski</name>
    <name type="ORF">CG11495</name>
</gene>
<accession>Q9VZU2</accession>
<accession>Q95VY0</accession>
<feature type="chain" id="PRO_0000213136" description="Protein-cysteine N-palmitoyltransferase Rasp">
    <location>
        <begin position="1"/>
        <end position="500"/>
    </location>
</feature>
<feature type="transmembrane region" description="Helical" evidence="2">
    <location>
        <begin position="15"/>
        <end position="35"/>
    </location>
</feature>
<feature type="transmembrane region" description="Helical" evidence="2">
    <location>
        <begin position="73"/>
        <end position="93"/>
    </location>
</feature>
<feature type="transmembrane region" description="Helical" evidence="2">
    <location>
        <begin position="105"/>
        <end position="125"/>
    </location>
</feature>
<feature type="transmembrane region" description="Helical" evidence="2">
    <location>
        <begin position="134"/>
        <end position="154"/>
    </location>
</feature>
<feature type="transmembrane region" description="Helical" evidence="2">
    <location>
        <begin position="206"/>
        <end position="226"/>
    </location>
</feature>
<feature type="transmembrane region" description="Helical" evidence="2">
    <location>
        <begin position="243"/>
        <end position="263"/>
    </location>
</feature>
<feature type="transmembrane region" description="Helical" evidence="2">
    <location>
        <begin position="293"/>
        <end position="313"/>
    </location>
</feature>
<feature type="transmembrane region" description="Helical" evidence="2">
    <location>
        <begin position="372"/>
        <end position="392"/>
    </location>
</feature>
<feature type="transmembrane region" description="Helical" evidence="2">
    <location>
        <begin position="429"/>
        <end position="449"/>
    </location>
</feature>
<feature type="transmembrane region" description="Helical" evidence="2">
    <location>
        <begin position="461"/>
        <end position="481"/>
    </location>
</feature>
<feature type="active site" evidence="2">
    <location>
        <position position="381"/>
    </location>
</feature>
<feature type="sequence conflict" description="In Ref. 1 and 6." evidence="9" ref="1 6">
    <original>G</original>
    <variation>V</variation>
    <location>
        <position position="91"/>
    </location>
</feature>
<name>HHAT_DROME</name>